<name>NEMA1_LINRU</name>
<protein>
    <recommendedName>
        <fullName evidence="5">Nemertide alpha-1</fullName>
    </recommendedName>
</protein>
<sequence length="76" mass="8232">YRIASSSIAKMKTAVFLVGLLFLGLVFADEAAIDSEFDQSIDKRGCIATGSFCTLSKGCCTKNCGWNFKCNPPNQK</sequence>
<dbReference type="SMR" id="P0DQS2"/>
<dbReference type="GO" id="GO:0005576">
    <property type="term" value="C:extracellular region"/>
    <property type="evidence" value="ECO:0007669"/>
    <property type="project" value="UniProtKB-SubCell"/>
</dbReference>
<dbReference type="GO" id="GO:0017080">
    <property type="term" value="F:sodium channel regulator activity"/>
    <property type="evidence" value="ECO:0007669"/>
    <property type="project" value="UniProtKB-KW"/>
</dbReference>
<dbReference type="GO" id="GO:0090729">
    <property type="term" value="F:toxin activity"/>
    <property type="evidence" value="ECO:0007669"/>
    <property type="project" value="UniProtKB-KW"/>
</dbReference>
<organism>
    <name type="scientific">Lineus ruber</name>
    <name type="common">Red bootlace</name>
    <name type="synonym">Poseidon ruber</name>
    <dbReference type="NCBI Taxonomy" id="88926"/>
    <lineage>
        <taxon>Eukaryota</taxon>
        <taxon>Metazoa</taxon>
        <taxon>Spiralia</taxon>
        <taxon>Lophotrochozoa</taxon>
        <taxon>Nemertea</taxon>
        <taxon>Pilidiophora</taxon>
        <taxon>Heteronemertea</taxon>
        <taxon>Lineidae</taxon>
        <taxon>Lineus</taxon>
    </lineage>
</organism>
<accession>P0DQS2</accession>
<comment type="function">
    <text evidence="2 3 4">Highly potent toxin against insect sodium channel (Nav) and with less potent activity against mammalian sodium channels (PubMed:29567943). Potently inhibits inactivation of insect sodium channels of B.germanica (BgNav1) (EC(50)=8.6 nM), D.melanogaster (Dm Nav1), and arachnid sodium channel V.destructor (VdNav1) (PubMed:29567943, PubMed:34445875). Also delays the inactivation of most mammalian Nav channels tested (human Nav1.1/SCN1A; EC(50)=124.1 nM, rat Nav1.2/SCN2A; EC(50)=359.6 nM, rat Nav1.3/SCN3A; EC(50)=135.4 nM, rat Nav1.4/SCN4A; EC(50)=145.5 nM, human Nav1.5/SCN5A; EC(50)=138.3 nM, mouse Nav1.6/SCN8A; EC(50)=240.4 nM, human Nav1.9/SCN9A; EC(50)=76.5 nM) (PubMed:29567943, PubMed:34445875). 1 uM is enough to completely inhibits the inactivation, resulting in sustained non-inactivating currents (PubMed:29567943). In addition, the toxin significantly enhances the recovery from inactivation, and the open state is not required for the toxin to interact with the channel (PubMed:29567943). In vivo, injection into green crabs (Carcinus maenas at 1 mug/kg) of small doses (1-5 ug/kg) results in slow and fast permanent paralysis, whereas injection of high doses (more than 10 ug/kg) causes death (PubMed:29567943). Injection into juvenile Blaptica dubia cockroaches results in death or permanent paralysis at doses higher than 7.1 ug/kg (PubMed:29567943). Injection into brine shrimp (Artemia salina) stops movement or causes death after 24 hours (EC(50)=0.3 uM) (PubMed:34445875). In the rare inherited cardiac arrhythmia Brugada syndrome 1 (BRGDA1), this toxin is able to restore the loss of function by reducing channel inactivation, without affecting activation, by binding to Nav1.5/SCN5A (PubMed:32850980).</text>
</comment>
<comment type="subcellular location">
    <subcellularLocation>
        <location evidence="7">Secreted</location>
    </subcellularLocation>
</comment>
<comment type="tissue specificity">
    <text evidence="2">Confined to the epidermis and to the mucus layer.</text>
</comment>
<comment type="domain">
    <text evidence="7">The presence of a 'disulfide through disulfide knot' structurally defines this protein as a knottin.</text>
</comment>
<comment type="mass spectrometry" mass="3308.767" method="MALDI" evidence="2"/>
<comment type="miscellaneous">
    <text evidence="2 4">Negative results: does not show effect on both human and rat Nav1.8/SCN10A.</text>
</comment>
<comment type="miscellaneous">
    <text evidence="6">The primary and 3D structures of the mature peptide is identical to that of Nemertide alpha-1 from Lineus longissimus (AC P0DM24). Links to the 3D-structure (PDB=6ENA) is available in this entry.</text>
</comment>
<comment type="similarity">
    <text evidence="6">Belongs to the nemertide family.</text>
</comment>
<proteinExistence type="evidence at protein level"/>
<feature type="signal peptide" evidence="1">
    <location>
        <begin position="1" status="less than"/>
        <end position="28"/>
    </location>
</feature>
<feature type="propeptide" id="PRO_0000454422" evidence="7">
    <location>
        <begin position="29"/>
        <end position="44"/>
    </location>
</feature>
<feature type="chain" id="PRO_0000454423" description="Nemertide alpha-1" evidence="2">
    <location>
        <begin position="45"/>
        <end position="75"/>
    </location>
</feature>
<feature type="site" description="Hydrophobic/aromatic residue important for potent activity" evidence="8">
    <location>
        <position position="52"/>
    </location>
</feature>
<feature type="modified residue" description="4-hydroxyproline" evidence="2">
    <location>
        <position position="72"/>
    </location>
</feature>
<feature type="modified residue" description="4-hydroxyproline" evidence="2">
    <location>
        <position position="73"/>
    </location>
</feature>
<feature type="disulfide bond" evidence="2">
    <location>
        <begin position="46"/>
        <end position="60"/>
    </location>
</feature>
<feature type="disulfide bond" evidence="2">
    <location>
        <begin position="53"/>
        <end position="64"/>
    </location>
</feature>
<feature type="disulfide bond" evidence="2">
    <location>
        <begin position="59"/>
        <end position="70"/>
    </location>
</feature>
<feature type="non-terminal residue">
    <location>
        <position position="1"/>
    </location>
</feature>
<keyword id="KW-0165">Cleavage on pair of basic residues</keyword>
<keyword id="KW-1015">Disulfide bond</keyword>
<keyword id="KW-0379">Hydroxylation</keyword>
<keyword id="KW-0872">Ion channel impairing toxin</keyword>
<keyword id="KW-0960">Knottin</keyword>
<keyword id="KW-0528">Neurotoxin</keyword>
<keyword id="KW-0964">Secreted</keyword>
<keyword id="KW-0732">Signal</keyword>
<keyword id="KW-0800">Toxin</keyword>
<keyword id="KW-0738">Voltage-gated sodium channel impairing toxin</keyword>
<evidence type="ECO:0000255" key="1"/>
<evidence type="ECO:0000269" key="2">
    <source>
    </source>
</evidence>
<evidence type="ECO:0000269" key="3">
    <source>
    </source>
</evidence>
<evidence type="ECO:0000269" key="4">
    <source>
    </source>
</evidence>
<evidence type="ECO:0000303" key="5">
    <source>
    </source>
</evidence>
<evidence type="ECO:0000305" key="6"/>
<evidence type="ECO:0000305" key="7">
    <source>
    </source>
</evidence>
<evidence type="ECO:0000305" key="8">
    <source>
    </source>
</evidence>
<reference key="1">
    <citation type="journal article" date="2018" name="Sci. Rep.">
        <title>Peptide ion channel toxins from the bootlace worm, the longest animal on Earth.</title>
        <authorList>
            <person name="Jacobsson E."/>
            <person name="Andersson H.S."/>
            <person name="Strand M."/>
            <person name="Peigneur S."/>
            <person name="Eriksson C."/>
            <person name="Loden H."/>
            <person name="Shariatgorji M."/>
            <person name="Andren P.E."/>
            <person name="Lebbe E.K.M."/>
            <person name="Rosengren K.J."/>
            <person name="Tytgat J."/>
            <person name="Goeransson U."/>
        </authorList>
    </citation>
    <scope>NUCLEOTIDE SEQUENCE [MRNA]</scope>
    <scope>FUNCTION</scope>
    <scope>MASS SPECTROMETRY</scope>
    <scope>HYDROXYLATION AT PRO-72 AND PRO-73</scope>
    <scope>SYNTHESIS OF 45-75</scope>
    <scope>BIOASSAY</scope>
</reference>
<reference key="2">
    <citation type="journal article" date="2021" name="J. Nat. Prod.">
        <title>Functional characterization of the nemertide alpha family of peptide toxins.</title>
        <authorList>
            <person name="Jacobsson E."/>
            <person name="Peigneur S."/>
            <person name="Andersson H.S."/>
            <person name="Laborde Q."/>
            <person name="Strand M."/>
            <person name="Tytgat J."/>
            <person name="Goeransson U."/>
        </authorList>
    </citation>
    <scope>NUCLEOTIDE SEQUENCE [MRNA]</scope>
    <scope>SYNTHESIS OF 45-75</scope>
    <scope>FUNCTION</scope>
</reference>
<reference key="3">
    <citation type="journal article" date="2020" name="Front. Cardiovasc. Med.">
        <title>Compound heterozygous SCN5A mutations in severe sodium channelopathy with Brugada syndrome: a case report.</title>
        <authorList>
            <person name="Nijak A."/>
            <person name="Labro A.J."/>
            <person name="De Wilde H."/>
            <person name="Dewals W."/>
            <person name="Peigneur S."/>
            <person name="Tytgat J."/>
            <person name="Snyders D."/>
            <person name="Sieliwonczyk E."/>
            <person name="Simons E."/>
            <person name="Van Craenenbroeck E."/>
            <person name="Schepers D."/>
            <person name="Van Laer L."/>
            <person name="Saenen J."/>
            <person name="Loeys B."/>
            <person name="Alaerts M."/>
        </authorList>
    </citation>
    <scope>EFFECT IN BRUGADA SYNDROME 1</scope>
    <scope>SYNTHESIS OF 45-75</scope>
</reference>